<feature type="chain" id="PRO_0000310034" description="Large ribosomal subunit protein uL2">
    <location>
        <begin position="1"/>
        <end position="273"/>
    </location>
</feature>
<feature type="region of interest" description="Disordered" evidence="2">
    <location>
        <begin position="222"/>
        <end position="273"/>
    </location>
</feature>
<feature type="compositionally biased region" description="Basic and acidic residues" evidence="2">
    <location>
        <begin position="264"/>
        <end position="273"/>
    </location>
</feature>
<accession>A0LIJ3</accession>
<comment type="function">
    <text evidence="1">One of the primary rRNA binding proteins. Required for association of the 30S and 50S subunits to form the 70S ribosome, for tRNA binding and peptide bond formation. It has been suggested to have peptidyltransferase activity; this is somewhat controversial. Makes several contacts with the 16S rRNA in the 70S ribosome.</text>
</comment>
<comment type="subunit">
    <text evidence="1">Part of the 50S ribosomal subunit. Forms a bridge to the 30S subunit in the 70S ribosome.</text>
</comment>
<comment type="similarity">
    <text evidence="1">Belongs to the universal ribosomal protein uL2 family.</text>
</comment>
<gene>
    <name evidence="1" type="primary">rplB</name>
    <name type="ordered locus">Sfum_1558</name>
</gene>
<sequence length="273" mass="29897">MGIRKVNPTSAGRRFQTYATFEELSNVEPEKSLLEPLRRSGGRNASGRVTSWHRGGGHKRRYRIIDFKRNKENIPATVASIEYDPNRSSHIALLKYADGEKRYIIAPVGLSVGDTVLTGAEADIKPGNCLRLANMPLGTIIHNVELKPGKGGQLARSAGSSIQLIAKEGTHAILRLPSSEMRMVPISCKATVGQVGNIDHENLSLGKAGRKRWLGKRPHVRGVAMNPVDHPMGGGEGRSSGGRHPCTPWGVPTKGYRTRKSKRSDKLIVHRRK</sequence>
<dbReference type="EMBL" id="CP000478">
    <property type="protein sequence ID" value="ABK17245.1"/>
    <property type="molecule type" value="Genomic_DNA"/>
</dbReference>
<dbReference type="RefSeq" id="WP_011698415.1">
    <property type="nucleotide sequence ID" value="NC_008554.1"/>
</dbReference>
<dbReference type="SMR" id="A0LIJ3"/>
<dbReference type="FunCoup" id="A0LIJ3">
    <property type="interactions" value="743"/>
</dbReference>
<dbReference type="STRING" id="335543.Sfum_1558"/>
<dbReference type="KEGG" id="sfu:Sfum_1558"/>
<dbReference type="eggNOG" id="COG0090">
    <property type="taxonomic scope" value="Bacteria"/>
</dbReference>
<dbReference type="HOGENOM" id="CLU_036235_2_1_7"/>
<dbReference type="InParanoid" id="A0LIJ3"/>
<dbReference type="OrthoDB" id="9778722at2"/>
<dbReference type="Proteomes" id="UP000001784">
    <property type="component" value="Chromosome"/>
</dbReference>
<dbReference type="GO" id="GO:0015934">
    <property type="term" value="C:large ribosomal subunit"/>
    <property type="evidence" value="ECO:0007669"/>
    <property type="project" value="InterPro"/>
</dbReference>
<dbReference type="GO" id="GO:0019843">
    <property type="term" value="F:rRNA binding"/>
    <property type="evidence" value="ECO:0007669"/>
    <property type="project" value="UniProtKB-UniRule"/>
</dbReference>
<dbReference type="GO" id="GO:0003735">
    <property type="term" value="F:structural constituent of ribosome"/>
    <property type="evidence" value="ECO:0007669"/>
    <property type="project" value="InterPro"/>
</dbReference>
<dbReference type="GO" id="GO:0016740">
    <property type="term" value="F:transferase activity"/>
    <property type="evidence" value="ECO:0007669"/>
    <property type="project" value="InterPro"/>
</dbReference>
<dbReference type="GO" id="GO:0002181">
    <property type="term" value="P:cytoplasmic translation"/>
    <property type="evidence" value="ECO:0007669"/>
    <property type="project" value="TreeGrafter"/>
</dbReference>
<dbReference type="FunFam" id="2.30.30.30:FF:000001">
    <property type="entry name" value="50S ribosomal protein L2"/>
    <property type="match status" value="1"/>
</dbReference>
<dbReference type="FunFam" id="2.40.50.140:FF:000003">
    <property type="entry name" value="50S ribosomal protein L2"/>
    <property type="match status" value="1"/>
</dbReference>
<dbReference type="FunFam" id="4.10.950.10:FF:000001">
    <property type="entry name" value="50S ribosomal protein L2"/>
    <property type="match status" value="1"/>
</dbReference>
<dbReference type="Gene3D" id="2.30.30.30">
    <property type="match status" value="1"/>
</dbReference>
<dbReference type="Gene3D" id="2.40.50.140">
    <property type="entry name" value="Nucleic acid-binding proteins"/>
    <property type="match status" value="1"/>
</dbReference>
<dbReference type="Gene3D" id="4.10.950.10">
    <property type="entry name" value="Ribosomal protein L2, domain 3"/>
    <property type="match status" value="1"/>
</dbReference>
<dbReference type="HAMAP" id="MF_01320_B">
    <property type="entry name" value="Ribosomal_uL2_B"/>
    <property type="match status" value="1"/>
</dbReference>
<dbReference type="InterPro" id="IPR012340">
    <property type="entry name" value="NA-bd_OB-fold"/>
</dbReference>
<dbReference type="InterPro" id="IPR014722">
    <property type="entry name" value="Rib_uL2_dom2"/>
</dbReference>
<dbReference type="InterPro" id="IPR002171">
    <property type="entry name" value="Ribosomal_uL2"/>
</dbReference>
<dbReference type="InterPro" id="IPR005880">
    <property type="entry name" value="Ribosomal_uL2_bac/org-type"/>
</dbReference>
<dbReference type="InterPro" id="IPR022669">
    <property type="entry name" value="Ribosomal_uL2_C"/>
</dbReference>
<dbReference type="InterPro" id="IPR022671">
    <property type="entry name" value="Ribosomal_uL2_CS"/>
</dbReference>
<dbReference type="InterPro" id="IPR014726">
    <property type="entry name" value="Ribosomal_uL2_dom3"/>
</dbReference>
<dbReference type="InterPro" id="IPR022666">
    <property type="entry name" value="Ribosomal_uL2_RNA-bd_dom"/>
</dbReference>
<dbReference type="InterPro" id="IPR008991">
    <property type="entry name" value="Translation_prot_SH3-like_sf"/>
</dbReference>
<dbReference type="NCBIfam" id="TIGR01171">
    <property type="entry name" value="rplB_bact"/>
    <property type="match status" value="1"/>
</dbReference>
<dbReference type="PANTHER" id="PTHR13691:SF5">
    <property type="entry name" value="LARGE RIBOSOMAL SUBUNIT PROTEIN UL2M"/>
    <property type="match status" value="1"/>
</dbReference>
<dbReference type="PANTHER" id="PTHR13691">
    <property type="entry name" value="RIBOSOMAL PROTEIN L2"/>
    <property type="match status" value="1"/>
</dbReference>
<dbReference type="Pfam" id="PF00181">
    <property type="entry name" value="Ribosomal_L2"/>
    <property type="match status" value="1"/>
</dbReference>
<dbReference type="Pfam" id="PF03947">
    <property type="entry name" value="Ribosomal_L2_C"/>
    <property type="match status" value="1"/>
</dbReference>
<dbReference type="PIRSF" id="PIRSF002158">
    <property type="entry name" value="Ribosomal_L2"/>
    <property type="match status" value="1"/>
</dbReference>
<dbReference type="SMART" id="SM01383">
    <property type="entry name" value="Ribosomal_L2"/>
    <property type="match status" value="1"/>
</dbReference>
<dbReference type="SMART" id="SM01382">
    <property type="entry name" value="Ribosomal_L2_C"/>
    <property type="match status" value="1"/>
</dbReference>
<dbReference type="SUPFAM" id="SSF50249">
    <property type="entry name" value="Nucleic acid-binding proteins"/>
    <property type="match status" value="1"/>
</dbReference>
<dbReference type="SUPFAM" id="SSF50104">
    <property type="entry name" value="Translation proteins SH3-like domain"/>
    <property type="match status" value="1"/>
</dbReference>
<dbReference type="PROSITE" id="PS00467">
    <property type="entry name" value="RIBOSOMAL_L2"/>
    <property type="match status" value="1"/>
</dbReference>
<name>RL2_SYNFM</name>
<protein>
    <recommendedName>
        <fullName evidence="1">Large ribosomal subunit protein uL2</fullName>
    </recommendedName>
    <alternativeName>
        <fullName evidence="3">50S ribosomal protein L2</fullName>
    </alternativeName>
</protein>
<keyword id="KW-1185">Reference proteome</keyword>
<keyword id="KW-0687">Ribonucleoprotein</keyword>
<keyword id="KW-0689">Ribosomal protein</keyword>
<keyword id="KW-0694">RNA-binding</keyword>
<keyword id="KW-0699">rRNA-binding</keyword>
<organism>
    <name type="scientific">Syntrophobacter fumaroxidans (strain DSM 10017 / MPOB)</name>
    <dbReference type="NCBI Taxonomy" id="335543"/>
    <lineage>
        <taxon>Bacteria</taxon>
        <taxon>Pseudomonadati</taxon>
        <taxon>Thermodesulfobacteriota</taxon>
        <taxon>Syntrophobacteria</taxon>
        <taxon>Syntrophobacterales</taxon>
        <taxon>Syntrophobacteraceae</taxon>
        <taxon>Syntrophobacter</taxon>
    </lineage>
</organism>
<evidence type="ECO:0000255" key="1">
    <source>
        <dbReference type="HAMAP-Rule" id="MF_01320"/>
    </source>
</evidence>
<evidence type="ECO:0000256" key="2">
    <source>
        <dbReference type="SAM" id="MobiDB-lite"/>
    </source>
</evidence>
<evidence type="ECO:0000305" key="3"/>
<proteinExistence type="inferred from homology"/>
<reference key="1">
    <citation type="submission" date="2006-10" db="EMBL/GenBank/DDBJ databases">
        <title>Complete sequence of Syntrophobacter fumaroxidans MPOB.</title>
        <authorList>
            <consortium name="US DOE Joint Genome Institute"/>
            <person name="Copeland A."/>
            <person name="Lucas S."/>
            <person name="Lapidus A."/>
            <person name="Barry K."/>
            <person name="Detter J.C."/>
            <person name="Glavina del Rio T."/>
            <person name="Hammon N."/>
            <person name="Israni S."/>
            <person name="Pitluck S."/>
            <person name="Goltsman E.G."/>
            <person name="Martinez M."/>
            <person name="Schmutz J."/>
            <person name="Larimer F."/>
            <person name="Land M."/>
            <person name="Hauser L."/>
            <person name="Kyrpides N."/>
            <person name="Kim E."/>
            <person name="Boone D.R."/>
            <person name="Brockman F."/>
            <person name="Culley D."/>
            <person name="Ferry J."/>
            <person name="Gunsalus R."/>
            <person name="McInerney M.J."/>
            <person name="Morrison M."/>
            <person name="Plugge C."/>
            <person name="Rohlin L."/>
            <person name="Scholten J."/>
            <person name="Sieber J."/>
            <person name="Stams A.J.M."/>
            <person name="Worm P."/>
            <person name="Henstra A.M."/>
            <person name="Richardson P."/>
        </authorList>
    </citation>
    <scope>NUCLEOTIDE SEQUENCE [LARGE SCALE GENOMIC DNA]</scope>
    <source>
        <strain>DSM 10017 / MPOB</strain>
    </source>
</reference>